<proteinExistence type="inferred from homology"/>
<protein>
    <recommendedName>
        <fullName>Probable C-terminal domain small phosphatase</fullName>
        <ecNumber>3.1.3.16</ecNumber>
    </recommendedName>
    <alternativeName>
        <fullName>Developmental gene 1148 protein</fullName>
    </alternativeName>
</protein>
<evidence type="ECO:0000250" key="1"/>
<evidence type="ECO:0000255" key="2">
    <source>
        <dbReference type="PROSITE-ProRule" id="PRU00336"/>
    </source>
</evidence>
<evidence type="ECO:0000256" key="3">
    <source>
        <dbReference type="SAM" id="MobiDB-lite"/>
    </source>
</evidence>
<dbReference type="EC" id="3.1.3.16"/>
<dbReference type="EMBL" id="AF111941">
    <property type="protein sequence ID" value="AAD28548.1"/>
    <property type="molecule type" value="Genomic_DNA"/>
</dbReference>
<dbReference type="EMBL" id="AAFI02000259">
    <property type="protein sequence ID" value="EAL60295.1"/>
    <property type="molecule type" value="Genomic_DNA"/>
</dbReference>
<dbReference type="RefSeq" id="XP_628708.1">
    <property type="nucleotide sequence ID" value="XM_628706.1"/>
</dbReference>
<dbReference type="SMR" id="Q9XYL0"/>
<dbReference type="FunCoup" id="Q9XYL0">
    <property type="interactions" value="19"/>
</dbReference>
<dbReference type="STRING" id="44689.Q9XYL0"/>
<dbReference type="PaxDb" id="44689-DDB0229894"/>
<dbReference type="EnsemblProtists" id="EAL60295">
    <property type="protein sequence ID" value="EAL60295"/>
    <property type="gene ID" value="DDB_G0294376"/>
</dbReference>
<dbReference type="GeneID" id="3385372"/>
<dbReference type="KEGG" id="ddi:DDB_G0294376"/>
<dbReference type="dictyBase" id="DDB_G0294376">
    <property type="gene designation" value="fcpA"/>
</dbReference>
<dbReference type="VEuPathDB" id="AmoebaDB:DDB_G0294376"/>
<dbReference type="eggNOG" id="KOG1605">
    <property type="taxonomic scope" value="Eukaryota"/>
</dbReference>
<dbReference type="HOGENOM" id="CLU_020262_4_0_1"/>
<dbReference type="InParanoid" id="Q9XYL0"/>
<dbReference type="OMA" id="HSQFKPD"/>
<dbReference type="PhylomeDB" id="Q9XYL0"/>
<dbReference type="PRO" id="PR:Q9XYL0"/>
<dbReference type="Proteomes" id="UP000002195">
    <property type="component" value="Unassembled WGS sequence"/>
</dbReference>
<dbReference type="GO" id="GO:0005634">
    <property type="term" value="C:nucleus"/>
    <property type="evidence" value="ECO:0007669"/>
    <property type="project" value="UniProtKB-SubCell"/>
</dbReference>
<dbReference type="GO" id="GO:0046872">
    <property type="term" value="F:metal ion binding"/>
    <property type="evidence" value="ECO:0007669"/>
    <property type="project" value="UniProtKB-KW"/>
</dbReference>
<dbReference type="GO" id="GO:0004721">
    <property type="term" value="F:phosphoprotein phosphatase activity"/>
    <property type="evidence" value="ECO:0000318"/>
    <property type="project" value="GO_Central"/>
</dbReference>
<dbReference type="GO" id="GO:0004722">
    <property type="term" value="F:protein serine/threonine phosphatase activity"/>
    <property type="evidence" value="ECO:0007669"/>
    <property type="project" value="UniProtKB-EC"/>
</dbReference>
<dbReference type="GO" id="GO:0006972">
    <property type="term" value="P:hyperosmotic response"/>
    <property type="evidence" value="ECO:0000270"/>
    <property type="project" value="dictyBase"/>
</dbReference>
<dbReference type="CDD" id="cd07521">
    <property type="entry name" value="HAD_FCP1-like"/>
    <property type="match status" value="1"/>
</dbReference>
<dbReference type="FunFam" id="3.40.50.1000:FF:000192">
    <property type="entry name" value="CTD small phosphatase-like protein"/>
    <property type="match status" value="1"/>
</dbReference>
<dbReference type="Gene3D" id="3.40.50.1000">
    <property type="entry name" value="HAD superfamily/HAD-like"/>
    <property type="match status" value="1"/>
</dbReference>
<dbReference type="InterPro" id="IPR011948">
    <property type="entry name" value="Dullard_phosphatase"/>
</dbReference>
<dbReference type="InterPro" id="IPR004274">
    <property type="entry name" value="FCP1_dom"/>
</dbReference>
<dbReference type="InterPro" id="IPR036412">
    <property type="entry name" value="HAD-like_sf"/>
</dbReference>
<dbReference type="InterPro" id="IPR023214">
    <property type="entry name" value="HAD_sf"/>
</dbReference>
<dbReference type="InterPro" id="IPR050365">
    <property type="entry name" value="TIM50"/>
</dbReference>
<dbReference type="NCBIfam" id="TIGR02251">
    <property type="entry name" value="HIF-SF_euk"/>
    <property type="match status" value="1"/>
</dbReference>
<dbReference type="PANTHER" id="PTHR12210">
    <property type="entry name" value="DULLARD PROTEIN PHOSPHATASE"/>
    <property type="match status" value="1"/>
</dbReference>
<dbReference type="Pfam" id="PF03031">
    <property type="entry name" value="NIF"/>
    <property type="match status" value="1"/>
</dbReference>
<dbReference type="SMART" id="SM00577">
    <property type="entry name" value="CPDc"/>
    <property type="match status" value="1"/>
</dbReference>
<dbReference type="SUPFAM" id="SSF81995">
    <property type="entry name" value="beta-sandwich domain of Sec23/24"/>
    <property type="match status" value="1"/>
</dbReference>
<dbReference type="SUPFAM" id="SSF56784">
    <property type="entry name" value="HAD-like"/>
    <property type="match status" value="1"/>
</dbReference>
<dbReference type="PROSITE" id="PS50969">
    <property type="entry name" value="FCP1"/>
    <property type="match status" value="1"/>
</dbReference>
<accession>Q9XYL0</accession>
<accession>Q54AK8</accession>
<sequence>MNSSPITQVSNPNDSLNHSSTNLIPSSHNSLNNYPQKSVKGNRKKKGSIINKLFCCFVPSNDQNNGNNINTDNGASNNDKLQQQKQYNQQQQQQYNQHQQQQQQQQQQQQYINKDSSQQNGEIPLMVPMIPRHVGLKTLVLDLDETLVHSSFKPVHNPDFIVPVEIEGTIHQVYVVKRPFVDDFLRAIAEKFEIVVFTASLAKYADPVLDFLDTGRVIHYRLFRESCHNHKGNYVKDLSRLGRDLKSTIIVDNSPSSYLFHPENAIPIDSWFDDKDDRELLDLLPLLDDLIKVEDVRLVLDESRNN</sequence>
<name>CTDS_DICDI</name>
<gene>
    <name type="primary">fcpA</name>
    <name type="synonym">ctdsp</name>
    <name type="synonym">DG1148</name>
    <name type="ORF">DDB_G0294376</name>
</gene>
<reference key="1">
    <citation type="submission" date="1998-12" db="EMBL/GenBank/DDBJ databases">
        <title>Dictyostelium discoideum Developmental gene DG1148. Disruption of this gene results in morphological defect.</title>
        <authorList>
            <person name="Iranfar N."/>
            <person name="Loomis W.F."/>
        </authorList>
    </citation>
    <scope>NUCLEOTIDE SEQUENCE [GENOMIC DNA]</scope>
    <source>
        <strain>AX4</strain>
    </source>
</reference>
<reference key="2">
    <citation type="journal article" date="2005" name="Nature">
        <title>The genome of the social amoeba Dictyostelium discoideum.</title>
        <authorList>
            <person name="Eichinger L."/>
            <person name="Pachebat J.A."/>
            <person name="Gloeckner G."/>
            <person name="Rajandream M.A."/>
            <person name="Sucgang R."/>
            <person name="Berriman M."/>
            <person name="Song J."/>
            <person name="Olsen R."/>
            <person name="Szafranski K."/>
            <person name="Xu Q."/>
            <person name="Tunggal B."/>
            <person name="Kummerfeld S."/>
            <person name="Madera M."/>
            <person name="Konfortov B.A."/>
            <person name="Rivero F."/>
            <person name="Bankier A.T."/>
            <person name="Lehmann R."/>
            <person name="Hamlin N."/>
            <person name="Davies R."/>
            <person name="Gaudet P."/>
            <person name="Fey P."/>
            <person name="Pilcher K."/>
            <person name="Chen G."/>
            <person name="Saunders D."/>
            <person name="Sodergren E.J."/>
            <person name="Davis P."/>
            <person name="Kerhornou A."/>
            <person name="Nie X."/>
            <person name="Hall N."/>
            <person name="Anjard C."/>
            <person name="Hemphill L."/>
            <person name="Bason N."/>
            <person name="Farbrother P."/>
            <person name="Desany B."/>
            <person name="Just E."/>
            <person name="Morio T."/>
            <person name="Rost R."/>
            <person name="Churcher C.M."/>
            <person name="Cooper J."/>
            <person name="Haydock S."/>
            <person name="van Driessche N."/>
            <person name="Cronin A."/>
            <person name="Goodhead I."/>
            <person name="Muzny D.M."/>
            <person name="Mourier T."/>
            <person name="Pain A."/>
            <person name="Lu M."/>
            <person name="Harper D."/>
            <person name="Lindsay R."/>
            <person name="Hauser H."/>
            <person name="James K.D."/>
            <person name="Quiles M."/>
            <person name="Madan Babu M."/>
            <person name="Saito T."/>
            <person name="Buchrieser C."/>
            <person name="Wardroper A."/>
            <person name="Felder M."/>
            <person name="Thangavelu M."/>
            <person name="Johnson D."/>
            <person name="Knights A."/>
            <person name="Loulseged H."/>
            <person name="Mungall K.L."/>
            <person name="Oliver K."/>
            <person name="Price C."/>
            <person name="Quail M.A."/>
            <person name="Urushihara H."/>
            <person name="Hernandez J."/>
            <person name="Rabbinowitsch E."/>
            <person name="Steffen D."/>
            <person name="Sanders M."/>
            <person name="Ma J."/>
            <person name="Kohara Y."/>
            <person name="Sharp S."/>
            <person name="Simmonds M.N."/>
            <person name="Spiegler S."/>
            <person name="Tivey A."/>
            <person name="Sugano S."/>
            <person name="White B."/>
            <person name="Walker D."/>
            <person name="Woodward J.R."/>
            <person name="Winckler T."/>
            <person name="Tanaka Y."/>
            <person name="Shaulsky G."/>
            <person name="Schleicher M."/>
            <person name="Weinstock G.M."/>
            <person name="Rosenthal A."/>
            <person name="Cox E.C."/>
            <person name="Chisholm R.L."/>
            <person name="Gibbs R.A."/>
            <person name="Loomis W.F."/>
            <person name="Platzer M."/>
            <person name="Kay R.R."/>
            <person name="Williams J.G."/>
            <person name="Dear P.H."/>
            <person name="Noegel A.A."/>
            <person name="Barrell B.G."/>
            <person name="Kuspa A."/>
        </authorList>
    </citation>
    <scope>NUCLEOTIDE SEQUENCE [LARGE SCALE GENOMIC DNA]</scope>
    <source>
        <strain>AX4</strain>
    </source>
</reference>
<organism>
    <name type="scientific">Dictyostelium discoideum</name>
    <name type="common">Social amoeba</name>
    <dbReference type="NCBI Taxonomy" id="44689"/>
    <lineage>
        <taxon>Eukaryota</taxon>
        <taxon>Amoebozoa</taxon>
        <taxon>Evosea</taxon>
        <taxon>Eumycetozoa</taxon>
        <taxon>Dictyostelia</taxon>
        <taxon>Dictyosteliales</taxon>
        <taxon>Dictyosteliaceae</taxon>
        <taxon>Dictyostelium</taxon>
    </lineage>
</organism>
<keyword id="KW-0378">Hydrolase</keyword>
<keyword id="KW-0460">Magnesium</keyword>
<keyword id="KW-0479">Metal-binding</keyword>
<keyword id="KW-0539">Nucleus</keyword>
<keyword id="KW-0904">Protein phosphatase</keyword>
<keyword id="KW-1185">Reference proteome</keyword>
<feature type="chain" id="PRO_0000328057" description="Probable C-terminal domain small phosphatase">
    <location>
        <begin position="1"/>
        <end position="306"/>
    </location>
</feature>
<feature type="domain" description="FCP1 homology" evidence="2">
    <location>
        <begin position="132"/>
        <end position="290"/>
    </location>
</feature>
<feature type="region of interest" description="Disordered" evidence="3">
    <location>
        <begin position="1"/>
        <end position="45"/>
    </location>
</feature>
<feature type="region of interest" description="Disordered" evidence="3">
    <location>
        <begin position="61"/>
        <end position="116"/>
    </location>
</feature>
<feature type="compositionally biased region" description="Polar residues" evidence="3">
    <location>
        <begin position="1"/>
        <end position="36"/>
    </location>
</feature>
<feature type="compositionally biased region" description="Low complexity" evidence="3">
    <location>
        <begin position="61"/>
        <end position="111"/>
    </location>
</feature>
<feature type="active site" description="4-aspartylphosphate intermediate" evidence="1">
    <location>
        <position position="142"/>
    </location>
</feature>
<feature type="active site" description="Proton donor" evidence="1">
    <location>
        <position position="144"/>
    </location>
</feature>
<feature type="binding site" evidence="1">
    <location>
        <position position="142"/>
    </location>
    <ligand>
        <name>Mg(2+)</name>
        <dbReference type="ChEBI" id="CHEBI:18420"/>
    </ligand>
</feature>
<feature type="binding site" evidence="1">
    <location>
        <position position="144"/>
    </location>
    <ligand>
        <name>Mg(2+)</name>
        <dbReference type="ChEBI" id="CHEBI:18420"/>
    </ligand>
</feature>
<feature type="binding site" evidence="1">
    <location>
        <position position="253"/>
    </location>
    <ligand>
        <name>Mg(2+)</name>
        <dbReference type="ChEBI" id="CHEBI:18420"/>
    </ligand>
</feature>
<feature type="site" description="Transition state stabilizer" evidence="1">
    <location>
        <position position="198"/>
    </location>
</feature>
<feature type="site" description="Transition state stabilizer" evidence="1">
    <location>
        <position position="236"/>
    </location>
</feature>
<comment type="function">
    <text evidence="1">May function as a phosphatase involved in the regulation of cell growth and differentiation.</text>
</comment>
<comment type="catalytic activity">
    <reaction>
        <text>O-phospho-L-seryl-[protein] + H2O = L-seryl-[protein] + phosphate</text>
        <dbReference type="Rhea" id="RHEA:20629"/>
        <dbReference type="Rhea" id="RHEA-COMP:9863"/>
        <dbReference type="Rhea" id="RHEA-COMP:11604"/>
        <dbReference type="ChEBI" id="CHEBI:15377"/>
        <dbReference type="ChEBI" id="CHEBI:29999"/>
        <dbReference type="ChEBI" id="CHEBI:43474"/>
        <dbReference type="ChEBI" id="CHEBI:83421"/>
        <dbReference type="EC" id="3.1.3.16"/>
    </reaction>
</comment>
<comment type="catalytic activity">
    <reaction>
        <text>O-phospho-L-threonyl-[protein] + H2O = L-threonyl-[protein] + phosphate</text>
        <dbReference type="Rhea" id="RHEA:47004"/>
        <dbReference type="Rhea" id="RHEA-COMP:11060"/>
        <dbReference type="Rhea" id="RHEA-COMP:11605"/>
        <dbReference type="ChEBI" id="CHEBI:15377"/>
        <dbReference type="ChEBI" id="CHEBI:30013"/>
        <dbReference type="ChEBI" id="CHEBI:43474"/>
        <dbReference type="ChEBI" id="CHEBI:61977"/>
        <dbReference type="EC" id="3.1.3.16"/>
    </reaction>
</comment>
<comment type="cofactor">
    <cofactor evidence="1">
        <name>Mg(2+)</name>
        <dbReference type="ChEBI" id="CHEBI:18420"/>
    </cofactor>
    <text evidence="1">Binds 1 Mg(2+) ion per monomer.</text>
</comment>
<comment type="subunit">
    <text evidence="1">Monomer.</text>
</comment>
<comment type="subcellular location">
    <subcellularLocation>
        <location evidence="1">Nucleus</location>
    </subcellularLocation>
</comment>